<feature type="chain" id="PRO_0000452720" description="Zinc finger protein 692">
    <location>
        <begin position="1"/>
        <end position="533"/>
    </location>
</feature>
<feature type="zinc finger region" description="C2H2-type 1" evidence="2">
    <location>
        <begin position="329"/>
        <end position="354"/>
    </location>
</feature>
<feature type="zinc finger region" description="C2H2-type 2" evidence="2">
    <location>
        <begin position="360"/>
        <end position="384"/>
    </location>
</feature>
<feature type="zinc finger region" description="C2H2-type 3" evidence="2">
    <location>
        <begin position="390"/>
        <end position="412"/>
    </location>
</feature>
<feature type="zinc finger region" description="C2H2-type 4" evidence="2">
    <location>
        <begin position="418"/>
        <end position="440"/>
    </location>
</feature>
<feature type="zinc finger region" description="C2H2-type 5" evidence="2">
    <location>
        <begin position="449"/>
        <end position="472"/>
    </location>
</feature>
<feature type="region of interest" description="Disordered" evidence="3">
    <location>
        <begin position="124"/>
        <end position="251"/>
    </location>
</feature>
<feature type="region of interest" description="Disordered" evidence="3">
    <location>
        <begin position="290"/>
        <end position="310"/>
    </location>
</feature>
<feature type="region of interest" description="Disordered" evidence="3">
    <location>
        <begin position="478"/>
        <end position="533"/>
    </location>
</feature>
<feature type="compositionally biased region" description="Basic and acidic residues" evidence="3">
    <location>
        <begin position="149"/>
        <end position="178"/>
    </location>
</feature>
<feature type="compositionally biased region" description="Acidic residues" evidence="3">
    <location>
        <begin position="190"/>
        <end position="208"/>
    </location>
</feature>
<feature type="compositionally biased region" description="Polar residues" evidence="3">
    <location>
        <begin position="290"/>
        <end position="305"/>
    </location>
</feature>
<feature type="compositionally biased region" description="Low complexity" evidence="3">
    <location>
        <begin position="481"/>
        <end position="492"/>
    </location>
</feature>
<feature type="compositionally biased region" description="Polar residues" evidence="3">
    <location>
        <begin position="500"/>
        <end position="521"/>
    </location>
</feature>
<feature type="modified residue" description="Phosphoserine" evidence="1">
    <location>
        <position position="233"/>
    </location>
</feature>
<feature type="modified residue" description="Phosphoserine" evidence="1">
    <location>
        <position position="471"/>
    </location>
</feature>
<organism>
    <name type="scientific">Rattus norvegicus</name>
    <name type="common">Rat</name>
    <dbReference type="NCBI Taxonomy" id="10116"/>
    <lineage>
        <taxon>Eukaryota</taxon>
        <taxon>Metazoa</taxon>
        <taxon>Chordata</taxon>
        <taxon>Craniata</taxon>
        <taxon>Vertebrata</taxon>
        <taxon>Euteleostomi</taxon>
        <taxon>Mammalia</taxon>
        <taxon>Eutheria</taxon>
        <taxon>Euarchontoglires</taxon>
        <taxon>Glires</taxon>
        <taxon>Rodentia</taxon>
        <taxon>Myomorpha</taxon>
        <taxon>Muroidea</taxon>
        <taxon>Muridae</taxon>
        <taxon>Murinae</taxon>
        <taxon>Rattus</taxon>
    </lineage>
</organism>
<sequence>MASPVADASRRRREKRRQLDARRSKCRIRLGGHMEQWCLLKERLGFSLHSQLAKFLLDRYTSSGCVLCAGPEPVPQKGLQYLVLLSHTHSRECSLVPGLRGPGGGEGELVWECSAGHTFSWEPSLIPTPSEVPKQAPLTHTTERTWCSEARRKQEAEGLECEHRERTQETRLSRRVEPPLETDPSVGEDQVVEEEEEEEEEEEEEELLSDASPWTYSSSPDDSEPDVPRPPPSPVTHTPKEGEIPPVPATLPTPCAVLASLGSTAALTSDTEVQMELSRTSQVPAELQMTESLDSPGSQAQSAPNPTCDEDTAQIGLRRIRKAAKRELMPCDFPGCGRIFSNRQYLNHHKKYQHIHQKSFCCPEPACGKSFNFKKHLKEHVKLHSDARDYICEFCARSFRTSSNLVIHRRIHTGEKPLQCEICGFTCRQKASLNWHRRKHAETAAALRFPCEFCGKRFEKPDSVVAHCSKSHPALLPVQESPGSLGSSPSISAPEPLQSPEGTSFSTSYDSNPAPSTSISSPGVPAPRNTEKS</sequence>
<keyword id="KW-0479">Metal-binding</keyword>
<keyword id="KW-0539">Nucleus</keyword>
<keyword id="KW-0597">Phosphoprotein</keyword>
<keyword id="KW-1185">Reference proteome</keyword>
<keyword id="KW-0677">Repeat</keyword>
<keyword id="KW-0862">Zinc</keyword>
<keyword id="KW-0863">Zinc-finger</keyword>
<evidence type="ECO:0000250" key="1">
    <source>
        <dbReference type="UniProtKB" id="Q9BU19"/>
    </source>
</evidence>
<evidence type="ECO:0000255" key="2">
    <source>
        <dbReference type="PROSITE-ProRule" id="PRU00042"/>
    </source>
</evidence>
<evidence type="ECO:0000256" key="3">
    <source>
        <dbReference type="SAM" id="MobiDB-lite"/>
    </source>
</evidence>
<evidence type="ECO:0000269" key="4">
    <source>
    </source>
</evidence>
<evidence type="ECO:0000305" key="5"/>
<evidence type="ECO:0000312" key="6">
    <source>
        <dbReference type="RGD" id="1306740"/>
    </source>
</evidence>
<comment type="function">
    <text evidence="4">May act as an transcriptional repressor for PCK1 gene expression, in turns may participate in the hepatic gluconeogenesis regulation through the activated AMPK signaling pathway.</text>
</comment>
<comment type="subcellular location">
    <subcellularLocation>
        <location evidence="1">Nucleus</location>
    </subcellularLocation>
</comment>
<comment type="PTM">
    <text evidence="1">Phosphorylation at Ser-471 results in loss of DNA-binding activity.</text>
</comment>
<comment type="similarity">
    <text evidence="5">Belongs to the krueppel C2H2-type zinc-finger protein family.</text>
</comment>
<protein>
    <recommendedName>
        <fullName evidence="5">Zinc finger protein 692</fullName>
    </recommendedName>
    <alternativeName>
        <fullName evidence="1">AICAR responsive element binding protein</fullName>
    </alternativeName>
</protein>
<reference key="1">
    <citation type="journal article" date="2004" name="Nature">
        <title>Genome sequence of the Brown Norway rat yields insights into mammalian evolution.</title>
        <authorList>
            <person name="Gibbs R.A."/>
            <person name="Weinstock G.M."/>
            <person name="Metzker M.L."/>
            <person name="Muzny D.M."/>
            <person name="Sodergren E.J."/>
            <person name="Scherer S."/>
            <person name="Scott G."/>
            <person name="Steffen D."/>
            <person name="Worley K.C."/>
            <person name="Burch P.E."/>
            <person name="Okwuonu G."/>
            <person name="Hines S."/>
            <person name="Lewis L."/>
            <person name="Deramo C."/>
            <person name="Delgado O."/>
            <person name="Dugan-Rocha S."/>
            <person name="Miner G."/>
            <person name="Morgan M."/>
            <person name="Hawes A."/>
            <person name="Gill R."/>
            <person name="Holt R.A."/>
            <person name="Adams M.D."/>
            <person name="Amanatides P.G."/>
            <person name="Baden-Tillson H."/>
            <person name="Barnstead M."/>
            <person name="Chin S."/>
            <person name="Evans C.A."/>
            <person name="Ferriera S."/>
            <person name="Fosler C."/>
            <person name="Glodek A."/>
            <person name="Gu Z."/>
            <person name="Jennings D."/>
            <person name="Kraft C.L."/>
            <person name="Nguyen T."/>
            <person name="Pfannkoch C.M."/>
            <person name="Sitter C."/>
            <person name="Sutton G.G."/>
            <person name="Venter J.C."/>
            <person name="Woodage T."/>
            <person name="Smith D."/>
            <person name="Lee H.-M."/>
            <person name="Gustafson E."/>
            <person name="Cahill P."/>
            <person name="Kana A."/>
            <person name="Doucette-Stamm L."/>
            <person name="Weinstock K."/>
            <person name="Fechtel K."/>
            <person name="Weiss R.B."/>
            <person name="Dunn D.M."/>
            <person name="Green E.D."/>
            <person name="Blakesley R.W."/>
            <person name="Bouffard G.G."/>
            <person name="De Jong P.J."/>
            <person name="Osoegawa K."/>
            <person name="Zhu B."/>
            <person name="Marra M."/>
            <person name="Schein J."/>
            <person name="Bosdet I."/>
            <person name="Fjell C."/>
            <person name="Jones S."/>
            <person name="Krzywinski M."/>
            <person name="Mathewson C."/>
            <person name="Siddiqui A."/>
            <person name="Wye N."/>
            <person name="McPherson J."/>
            <person name="Zhao S."/>
            <person name="Fraser C.M."/>
            <person name="Shetty J."/>
            <person name="Shatsman S."/>
            <person name="Geer K."/>
            <person name="Chen Y."/>
            <person name="Abramzon S."/>
            <person name="Nierman W.C."/>
            <person name="Havlak P.H."/>
            <person name="Chen R."/>
            <person name="Durbin K.J."/>
            <person name="Egan A."/>
            <person name="Ren Y."/>
            <person name="Song X.-Z."/>
            <person name="Li B."/>
            <person name="Liu Y."/>
            <person name="Qin X."/>
            <person name="Cawley S."/>
            <person name="Cooney A.J."/>
            <person name="D'Souza L.M."/>
            <person name="Martin K."/>
            <person name="Wu J.Q."/>
            <person name="Gonzalez-Garay M.L."/>
            <person name="Jackson A.R."/>
            <person name="Kalafus K.J."/>
            <person name="McLeod M.P."/>
            <person name="Milosavljevic A."/>
            <person name="Virk D."/>
            <person name="Volkov A."/>
            <person name="Wheeler D.A."/>
            <person name="Zhang Z."/>
            <person name="Bailey J.A."/>
            <person name="Eichler E.E."/>
            <person name="Tuzun E."/>
            <person name="Birney E."/>
            <person name="Mongin E."/>
            <person name="Ureta-Vidal A."/>
            <person name="Woodwark C."/>
            <person name="Zdobnov E."/>
            <person name="Bork P."/>
            <person name="Suyama M."/>
            <person name="Torrents D."/>
            <person name="Alexandersson M."/>
            <person name="Trask B.J."/>
            <person name="Young J.M."/>
            <person name="Huang H."/>
            <person name="Wang H."/>
            <person name="Xing H."/>
            <person name="Daniels S."/>
            <person name="Gietzen D."/>
            <person name="Schmidt J."/>
            <person name="Stevens K."/>
            <person name="Vitt U."/>
            <person name="Wingrove J."/>
            <person name="Camara F."/>
            <person name="Mar Alba M."/>
            <person name="Abril J.F."/>
            <person name="Guigo R."/>
            <person name="Smit A."/>
            <person name="Dubchak I."/>
            <person name="Rubin E.M."/>
            <person name="Couronne O."/>
            <person name="Poliakov A."/>
            <person name="Huebner N."/>
            <person name="Ganten D."/>
            <person name="Goesele C."/>
            <person name="Hummel O."/>
            <person name="Kreitler T."/>
            <person name="Lee Y.-A."/>
            <person name="Monti J."/>
            <person name="Schulz H."/>
            <person name="Zimdahl H."/>
            <person name="Himmelbauer H."/>
            <person name="Lehrach H."/>
            <person name="Jacob H.J."/>
            <person name="Bromberg S."/>
            <person name="Gullings-Handley J."/>
            <person name="Jensen-Seaman M.I."/>
            <person name="Kwitek A.E."/>
            <person name="Lazar J."/>
            <person name="Pasko D."/>
            <person name="Tonellato P.J."/>
            <person name="Twigger S."/>
            <person name="Ponting C.P."/>
            <person name="Duarte J.M."/>
            <person name="Rice S."/>
            <person name="Goodstadt L."/>
            <person name="Beatson S.A."/>
            <person name="Emes R.D."/>
            <person name="Winter E.E."/>
            <person name="Webber C."/>
            <person name="Brandt P."/>
            <person name="Nyakatura G."/>
            <person name="Adetobi M."/>
            <person name="Chiaromonte F."/>
            <person name="Elnitski L."/>
            <person name="Eswara P."/>
            <person name="Hardison R.C."/>
            <person name="Hou M."/>
            <person name="Kolbe D."/>
            <person name="Makova K."/>
            <person name="Miller W."/>
            <person name="Nekrutenko A."/>
            <person name="Riemer C."/>
            <person name="Schwartz S."/>
            <person name="Taylor J."/>
            <person name="Yang S."/>
            <person name="Zhang Y."/>
            <person name="Lindpaintner K."/>
            <person name="Andrews T.D."/>
            <person name="Caccamo M."/>
            <person name="Clamp M."/>
            <person name="Clarke L."/>
            <person name="Curwen V."/>
            <person name="Durbin R.M."/>
            <person name="Eyras E."/>
            <person name="Searle S.M."/>
            <person name="Cooper G.M."/>
            <person name="Batzoglou S."/>
            <person name="Brudno M."/>
            <person name="Sidow A."/>
            <person name="Stone E.A."/>
            <person name="Payseur B.A."/>
            <person name="Bourque G."/>
            <person name="Lopez-Otin C."/>
            <person name="Puente X.S."/>
            <person name="Chakrabarti K."/>
            <person name="Chatterji S."/>
            <person name="Dewey C."/>
            <person name="Pachter L."/>
            <person name="Bray N."/>
            <person name="Yap V.B."/>
            <person name="Caspi A."/>
            <person name="Tesler G."/>
            <person name="Pevzner P.A."/>
            <person name="Haussler D."/>
            <person name="Roskin K.M."/>
            <person name="Baertsch R."/>
            <person name="Clawson H."/>
            <person name="Furey T.S."/>
            <person name="Hinrichs A.S."/>
            <person name="Karolchik D."/>
            <person name="Kent W.J."/>
            <person name="Rosenbloom K.R."/>
            <person name="Trumbower H."/>
            <person name="Weirauch M."/>
            <person name="Cooper D.N."/>
            <person name="Stenson P.D."/>
            <person name="Ma B."/>
            <person name="Brent M."/>
            <person name="Arumugam M."/>
            <person name="Shteynberg D."/>
            <person name="Copley R.R."/>
            <person name="Taylor M.S."/>
            <person name="Riethman H."/>
            <person name="Mudunuri U."/>
            <person name="Peterson J."/>
            <person name="Guyer M."/>
            <person name="Felsenfeld A."/>
            <person name="Old S."/>
            <person name="Mockrin S."/>
            <person name="Collins F.S."/>
        </authorList>
    </citation>
    <scope>NUCLEOTIDE SEQUENCE [LARGE SCALE GENOMIC DNA]</scope>
    <source>
        <strain>Brown Norway</strain>
    </source>
</reference>
<reference key="2">
    <citation type="journal article" date="2004" name="Genome Res.">
        <title>The status, quality, and expansion of the NIH full-length cDNA project: the Mammalian Gene Collection (MGC).</title>
        <authorList>
            <consortium name="The MGC Project Team"/>
        </authorList>
    </citation>
    <scope>NUCLEOTIDE SEQUENCE [LARGE SCALE MRNA]</scope>
    <source>
        <tissue>Heart</tissue>
    </source>
</reference>
<reference key="3">
    <citation type="journal article" date="2006" name="Biochem. Biophys. Res. Commun.">
        <title>AMP-activated protein kinase regulates PEPCK gene expression by direct phosphorylation of a novel zinc finger transcription factor.</title>
        <authorList>
            <person name="Inoue E."/>
            <person name="Yamauchi J."/>
        </authorList>
    </citation>
    <scope>FUNCTION</scope>
</reference>
<dbReference type="EMBL" id="AC097876">
    <property type="status" value="NOT_ANNOTATED_CDS"/>
    <property type="molecule type" value="Genomic_DNA"/>
</dbReference>
<dbReference type="EMBL" id="BC166433">
    <property type="protein sequence ID" value="AAI66433.1"/>
    <property type="molecule type" value="mRNA"/>
</dbReference>
<dbReference type="RefSeq" id="XP_006246445.1">
    <property type="nucleotide sequence ID" value="XM_006246383.3"/>
</dbReference>
<dbReference type="RefSeq" id="XP_006246446.1">
    <property type="nucleotide sequence ID" value="XM_006246384.3"/>
</dbReference>
<dbReference type="RefSeq" id="XP_006246447.1">
    <property type="nucleotide sequence ID" value="XM_006246385.3"/>
</dbReference>
<dbReference type="RefSeq" id="XP_006246448.1">
    <property type="nucleotide sequence ID" value="XM_006246386.3"/>
</dbReference>
<dbReference type="SMR" id="F6WEQ6"/>
<dbReference type="FunCoup" id="F6WEQ6">
    <property type="interactions" value="1045"/>
</dbReference>
<dbReference type="PaxDb" id="10116-ENSRNOP00000031984"/>
<dbReference type="Ensembl" id="ENSRNOT00000038123.6">
    <property type="protein sequence ID" value="ENSRNOP00000031984.6"/>
    <property type="gene ID" value="ENSRNOG00000002682.7"/>
</dbReference>
<dbReference type="UCSC" id="RGD:1306740">
    <property type="organism name" value="rat"/>
</dbReference>
<dbReference type="AGR" id="RGD:1306740"/>
<dbReference type="RGD" id="1306740">
    <property type="gene designation" value="Zfp692"/>
</dbReference>
<dbReference type="GeneTree" id="ENSGT00940000161175"/>
<dbReference type="HOGENOM" id="CLU_045687_1_0_1"/>
<dbReference type="InParanoid" id="F6WEQ6"/>
<dbReference type="OMA" id="MVWECLA"/>
<dbReference type="OrthoDB" id="8685330at2759"/>
<dbReference type="PhylomeDB" id="F6WEQ6"/>
<dbReference type="TreeFam" id="TF332664"/>
<dbReference type="PRO" id="PR:F6WEQ6"/>
<dbReference type="Proteomes" id="UP000002494">
    <property type="component" value="Chromosome 10"/>
</dbReference>
<dbReference type="ExpressionAtlas" id="F6WEQ6">
    <property type="expression patterns" value="baseline and differential"/>
</dbReference>
<dbReference type="GO" id="GO:0005730">
    <property type="term" value="C:nucleolus"/>
    <property type="evidence" value="ECO:0007669"/>
    <property type="project" value="Ensembl"/>
</dbReference>
<dbReference type="GO" id="GO:0005654">
    <property type="term" value="C:nucleoplasm"/>
    <property type="evidence" value="ECO:0007669"/>
    <property type="project" value="Ensembl"/>
</dbReference>
<dbReference type="GO" id="GO:0005634">
    <property type="term" value="C:nucleus"/>
    <property type="evidence" value="ECO:0000318"/>
    <property type="project" value="GO_Central"/>
</dbReference>
<dbReference type="GO" id="GO:0001227">
    <property type="term" value="F:DNA-binding transcription repressor activity, RNA polymerase II-specific"/>
    <property type="evidence" value="ECO:0000266"/>
    <property type="project" value="RGD"/>
</dbReference>
<dbReference type="GO" id="GO:0000978">
    <property type="term" value="F:RNA polymerase II cis-regulatory region sequence-specific DNA binding"/>
    <property type="evidence" value="ECO:0000266"/>
    <property type="project" value="RGD"/>
</dbReference>
<dbReference type="GO" id="GO:0008270">
    <property type="term" value="F:zinc ion binding"/>
    <property type="evidence" value="ECO:0007669"/>
    <property type="project" value="UniProtKB-KW"/>
</dbReference>
<dbReference type="GO" id="GO:0000122">
    <property type="term" value="P:negative regulation of transcription by RNA polymerase II"/>
    <property type="evidence" value="ECO:0000266"/>
    <property type="project" value="RGD"/>
</dbReference>
<dbReference type="GO" id="GO:0006111">
    <property type="term" value="P:regulation of gluconeogenesis"/>
    <property type="evidence" value="ECO:0000250"/>
    <property type="project" value="UniProtKB"/>
</dbReference>
<dbReference type="GO" id="GO:0006357">
    <property type="term" value="P:regulation of transcription by RNA polymerase II"/>
    <property type="evidence" value="ECO:0000318"/>
    <property type="project" value="GO_Central"/>
</dbReference>
<dbReference type="FunFam" id="3.30.160.60:FF:000183">
    <property type="entry name" value="E3 ubiquitin-protein ligase ZFP91"/>
    <property type="match status" value="1"/>
</dbReference>
<dbReference type="FunFam" id="3.30.160.60:FF:000511">
    <property type="entry name" value="zinc finger protein 692 isoform X2"/>
    <property type="match status" value="1"/>
</dbReference>
<dbReference type="FunFam" id="3.30.160.60:FF:000577">
    <property type="entry name" value="zinc finger protein 692 isoform X2"/>
    <property type="match status" value="1"/>
</dbReference>
<dbReference type="FunFam" id="3.30.160.60:FF:000598">
    <property type="entry name" value="zinc finger protein 692 isoform X2"/>
    <property type="match status" value="1"/>
</dbReference>
<dbReference type="Gene3D" id="3.30.160.60">
    <property type="entry name" value="Classic Zinc Finger"/>
    <property type="match status" value="5"/>
</dbReference>
<dbReference type="InterPro" id="IPR050888">
    <property type="entry name" value="ZnF_C2H2-type_TF"/>
</dbReference>
<dbReference type="InterPro" id="IPR036236">
    <property type="entry name" value="Znf_C2H2_sf"/>
</dbReference>
<dbReference type="InterPro" id="IPR013087">
    <property type="entry name" value="Znf_C2H2_type"/>
</dbReference>
<dbReference type="PANTHER" id="PTHR24406">
    <property type="entry name" value="TRANSCRIPTIONAL REPRESSOR CTCFL-RELATED"/>
    <property type="match status" value="1"/>
</dbReference>
<dbReference type="Pfam" id="PF00096">
    <property type="entry name" value="zf-C2H2"/>
    <property type="match status" value="2"/>
</dbReference>
<dbReference type="SMART" id="SM00355">
    <property type="entry name" value="ZnF_C2H2"/>
    <property type="match status" value="5"/>
</dbReference>
<dbReference type="SUPFAM" id="SSF57667">
    <property type="entry name" value="beta-beta-alpha zinc fingers"/>
    <property type="match status" value="3"/>
</dbReference>
<dbReference type="PROSITE" id="PS00028">
    <property type="entry name" value="ZINC_FINGER_C2H2_1"/>
    <property type="match status" value="5"/>
</dbReference>
<dbReference type="PROSITE" id="PS50157">
    <property type="entry name" value="ZINC_FINGER_C2H2_2"/>
    <property type="match status" value="5"/>
</dbReference>
<name>ZN692_RAT</name>
<accession>F6WEQ6</accession>
<accession>B2GUW5</accession>
<gene>
    <name evidence="1" type="primary">Znf692</name>
    <name evidence="1" type="synonym">Arebp</name>
    <name evidence="6" type="synonym">Zfp692</name>
</gene>
<proteinExistence type="evidence at transcript level"/>